<proteinExistence type="inferred from homology"/>
<reference key="1">
    <citation type="journal article" date="1996" name="Science">
        <title>Complete genome sequence of the methanogenic archaeon, Methanococcus jannaschii.</title>
        <authorList>
            <person name="Bult C.J."/>
            <person name="White O."/>
            <person name="Olsen G.J."/>
            <person name="Zhou L."/>
            <person name="Fleischmann R.D."/>
            <person name="Sutton G.G."/>
            <person name="Blake J.A."/>
            <person name="FitzGerald L.M."/>
            <person name="Clayton R.A."/>
            <person name="Gocayne J.D."/>
            <person name="Kerlavage A.R."/>
            <person name="Dougherty B.A."/>
            <person name="Tomb J.-F."/>
            <person name="Adams M.D."/>
            <person name="Reich C.I."/>
            <person name="Overbeek R."/>
            <person name="Kirkness E.F."/>
            <person name="Weinstock K.G."/>
            <person name="Merrick J.M."/>
            <person name="Glodek A."/>
            <person name="Scott J.L."/>
            <person name="Geoghagen N.S.M."/>
            <person name="Weidman J.F."/>
            <person name="Fuhrmann J.L."/>
            <person name="Nguyen D."/>
            <person name="Utterback T.R."/>
            <person name="Kelley J.M."/>
            <person name="Peterson J.D."/>
            <person name="Sadow P.W."/>
            <person name="Hanna M.C."/>
            <person name="Cotton M.D."/>
            <person name="Roberts K.M."/>
            <person name="Hurst M.A."/>
            <person name="Kaine B.P."/>
            <person name="Borodovsky M."/>
            <person name="Klenk H.-P."/>
            <person name="Fraser C.M."/>
            <person name="Smith H.O."/>
            <person name="Woese C.R."/>
            <person name="Venter J.C."/>
        </authorList>
    </citation>
    <scope>NUCLEOTIDE SEQUENCE [LARGE SCALE GENOMIC DNA]</scope>
    <source>
        <strain>ATCC 43067 / DSM 2661 / JAL-1 / JCM 10045 / NBRC 100440</strain>
    </source>
</reference>
<organism>
    <name type="scientific">Methanocaldococcus jannaschii (strain ATCC 43067 / DSM 2661 / JAL-1 / JCM 10045 / NBRC 100440)</name>
    <name type="common">Methanococcus jannaschii</name>
    <dbReference type="NCBI Taxonomy" id="243232"/>
    <lineage>
        <taxon>Archaea</taxon>
        <taxon>Methanobacteriati</taxon>
        <taxon>Methanobacteriota</taxon>
        <taxon>Methanomada group</taxon>
        <taxon>Methanococci</taxon>
        <taxon>Methanococcales</taxon>
        <taxon>Methanocaldococcaceae</taxon>
        <taxon>Methanocaldococcus</taxon>
    </lineage>
</organism>
<dbReference type="EMBL" id="L77117">
    <property type="protein sequence ID" value="AAB99340.1"/>
    <property type="molecule type" value="Genomic_DNA"/>
</dbReference>
<dbReference type="PIR" id="C64466">
    <property type="entry name" value="C64466"/>
</dbReference>
<dbReference type="SMR" id="Q58728"/>
<dbReference type="FunCoup" id="Q58728">
    <property type="interactions" value="193"/>
</dbReference>
<dbReference type="STRING" id="243232.MJ_1332"/>
<dbReference type="PaxDb" id="243232-MJ_1332"/>
<dbReference type="EnsemblBacteria" id="AAB99340">
    <property type="protein sequence ID" value="AAB99340"/>
    <property type="gene ID" value="MJ_1332"/>
</dbReference>
<dbReference type="KEGG" id="mja:MJ_1332"/>
<dbReference type="eggNOG" id="arCOG00357">
    <property type="taxonomic scope" value="Archaea"/>
</dbReference>
<dbReference type="HOGENOM" id="CLU_037276_1_0_2"/>
<dbReference type="InParanoid" id="Q58728"/>
<dbReference type="PhylomeDB" id="Q58728"/>
<dbReference type="Proteomes" id="UP000000805">
    <property type="component" value="Chromosome"/>
</dbReference>
<dbReference type="GO" id="GO:0005737">
    <property type="term" value="C:cytoplasm"/>
    <property type="evidence" value="ECO:0000318"/>
    <property type="project" value="GO_Central"/>
</dbReference>
<dbReference type="GO" id="GO:0016887">
    <property type="term" value="F:ATP hydrolysis activity"/>
    <property type="evidence" value="ECO:0000318"/>
    <property type="project" value="GO_Central"/>
</dbReference>
<dbReference type="GO" id="GO:0005525">
    <property type="term" value="F:GTP binding"/>
    <property type="evidence" value="ECO:0007669"/>
    <property type="project" value="UniProtKB-KW"/>
</dbReference>
<dbReference type="CDD" id="cd01669">
    <property type="entry name" value="TGS_MJ1332_like"/>
    <property type="match status" value="1"/>
</dbReference>
<dbReference type="CDD" id="cd01899">
    <property type="entry name" value="Ygr210"/>
    <property type="match status" value="1"/>
</dbReference>
<dbReference type="FunFam" id="3.10.20.30:FF:000002">
    <property type="entry name" value="GTP pyrophosphokinase (RelA/SpoT)"/>
    <property type="match status" value="1"/>
</dbReference>
<dbReference type="FunFam" id="1.10.8.470:FF:000001">
    <property type="entry name" value="GTP-binding protein homolog"/>
    <property type="match status" value="1"/>
</dbReference>
<dbReference type="Gene3D" id="1.10.8.470">
    <property type="match status" value="1"/>
</dbReference>
<dbReference type="Gene3D" id="3.10.20.30">
    <property type="match status" value="1"/>
</dbReference>
<dbReference type="Gene3D" id="3.40.50.300">
    <property type="entry name" value="P-loop containing nucleotide triphosphate hydrolases"/>
    <property type="match status" value="1"/>
</dbReference>
<dbReference type="InterPro" id="IPR012675">
    <property type="entry name" value="Beta-grasp_dom_sf"/>
</dbReference>
<dbReference type="InterPro" id="IPR031167">
    <property type="entry name" value="G_OBG"/>
</dbReference>
<dbReference type="InterPro" id="IPR006073">
    <property type="entry name" value="GTP-bd"/>
</dbReference>
<dbReference type="InterPro" id="IPR027417">
    <property type="entry name" value="P-loop_NTPase"/>
</dbReference>
<dbReference type="InterPro" id="IPR004095">
    <property type="entry name" value="TGS"/>
</dbReference>
<dbReference type="InterPro" id="IPR012676">
    <property type="entry name" value="TGS-like"/>
</dbReference>
<dbReference type="InterPro" id="IPR013646">
    <property type="entry name" value="YGR210-like_G4"/>
</dbReference>
<dbReference type="NCBIfam" id="NF007171">
    <property type="entry name" value="PRK09602.1"/>
    <property type="match status" value="1"/>
</dbReference>
<dbReference type="PANTHER" id="PTHR23305">
    <property type="entry name" value="OBG GTPASE FAMILY"/>
    <property type="match status" value="1"/>
</dbReference>
<dbReference type="PANTHER" id="PTHR23305:SF1">
    <property type="entry name" value="OBG-TYPE G DOMAIN-CONTAINING PROTEIN"/>
    <property type="match status" value="1"/>
</dbReference>
<dbReference type="Pfam" id="PF01926">
    <property type="entry name" value="MMR_HSR1"/>
    <property type="match status" value="1"/>
</dbReference>
<dbReference type="Pfam" id="PF02824">
    <property type="entry name" value="TGS"/>
    <property type="match status" value="1"/>
</dbReference>
<dbReference type="Pfam" id="PF08438">
    <property type="entry name" value="YGR210-like_G4"/>
    <property type="match status" value="1"/>
</dbReference>
<dbReference type="PRINTS" id="PR00326">
    <property type="entry name" value="GTP1OBG"/>
</dbReference>
<dbReference type="SUPFAM" id="SSF52540">
    <property type="entry name" value="P-loop containing nucleoside triphosphate hydrolases"/>
    <property type="match status" value="1"/>
</dbReference>
<dbReference type="SUPFAM" id="SSF81271">
    <property type="entry name" value="TGS-like"/>
    <property type="match status" value="1"/>
</dbReference>
<dbReference type="PROSITE" id="PS51710">
    <property type="entry name" value="G_OBG"/>
    <property type="match status" value="1"/>
</dbReference>
<dbReference type="PROSITE" id="PS51880">
    <property type="entry name" value="TGS"/>
    <property type="match status" value="1"/>
</dbReference>
<name>Y1332_METJA</name>
<sequence length="393" mass="44267">MAMIGLVGKPNVGKSTMFNALTEKPAEIGNYPFTTIQPNKGIAYITSPCPCKELGVKCNPRNSKCIDGIRHIPVEVIDVAGLVPGAHEGRGMGNKFLDDLRQADAFILVVDASGKTDAEGNPTENYDPVEDVKFLLNEIDMWIYSILTKNWDKLARRAQQEKNIVKALKDQLSGLNIDEDDIKMAIRDMDESPIKWTEEDLLNLAKKLRKISKPMIIAANKADHPDAEKNIERLKKEFKDYIVIPTSAEIELALKRAEKAGIIKRKENDFEIIDESKVNEQMRRAFDYIKDFLKKYGGTGVQECINKAYFDLLDMIVVYPVEDENKFSDKQGNVLPDAFLVKKGSTARDLAYKVHTELGEKFIYAIDAKKKIRVGADYELKHNDIIKIVSAAK</sequence>
<accession>Q58728</accession>
<feature type="chain" id="PRO_0000205446" description="Uncharacterized GTP-binding protein MJ1332">
    <location>
        <begin position="1"/>
        <end position="393"/>
    </location>
</feature>
<feature type="domain" description="OBG-type G" evidence="1">
    <location>
        <begin position="2"/>
        <end position="266"/>
    </location>
</feature>
<feature type="domain" description="TGS" evidence="2">
    <location>
        <begin position="314"/>
        <end position="390"/>
    </location>
</feature>
<feature type="binding site" evidence="1">
    <location>
        <begin position="8"/>
        <end position="15"/>
    </location>
    <ligand>
        <name>GTP</name>
        <dbReference type="ChEBI" id="CHEBI:37565"/>
    </ligand>
</feature>
<feature type="binding site" evidence="1">
    <location>
        <begin position="78"/>
        <end position="82"/>
    </location>
    <ligand>
        <name>GTP</name>
        <dbReference type="ChEBI" id="CHEBI:37565"/>
    </ligand>
</feature>
<gene>
    <name type="ordered locus">MJ1332</name>
</gene>
<protein>
    <recommendedName>
        <fullName>Uncharacterized GTP-binding protein MJ1332</fullName>
    </recommendedName>
</protein>
<evidence type="ECO:0000255" key="1">
    <source>
        <dbReference type="PROSITE-ProRule" id="PRU01047"/>
    </source>
</evidence>
<evidence type="ECO:0000255" key="2">
    <source>
        <dbReference type="PROSITE-ProRule" id="PRU01228"/>
    </source>
</evidence>
<keyword id="KW-0342">GTP-binding</keyword>
<keyword id="KW-0547">Nucleotide-binding</keyword>
<keyword id="KW-1185">Reference proteome</keyword>
<comment type="similarity">
    <text evidence="1">Belongs to the TRAFAC class OBG-HflX-like GTPase superfamily. OBG GTPase family.</text>
</comment>